<organism>
    <name type="scientific">Homo sapiens</name>
    <name type="common">Human</name>
    <dbReference type="NCBI Taxonomy" id="9606"/>
    <lineage>
        <taxon>Eukaryota</taxon>
        <taxon>Metazoa</taxon>
        <taxon>Chordata</taxon>
        <taxon>Craniata</taxon>
        <taxon>Vertebrata</taxon>
        <taxon>Euteleostomi</taxon>
        <taxon>Mammalia</taxon>
        <taxon>Eutheria</taxon>
        <taxon>Euarchontoglires</taxon>
        <taxon>Primates</taxon>
        <taxon>Haplorrhini</taxon>
        <taxon>Catarrhini</taxon>
        <taxon>Hominidae</taxon>
        <taxon>Homo</taxon>
    </lineage>
</organism>
<name>CO4A6_HUMAN</name>
<gene>
    <name type="primary">COL4A6</name>
</gene>
<protein>
    <recommendedName>
        <fullName>Collagen alpha-6(IV) chain</fullName>
    </recommendedName>
</protein>
<feature type="signal peptide" evidence="2">
    <location>
        <begin position="1"/>
        <end position="22"/>
    </location>
</feature>
<feature type="chain" id="PRO_0000005853" description="Collagen alpha-6(IV) chain">
    <location>
        <begin position="23"/>
        <end position="1691"/>
    </location>
</feature>
<feature type="domain" description="Collagen IV NC1" evidence="3">
    <location>
        <begin position="1467"/>
        <end position="1691"/>
    </location>
</feature>
<feature type="region of interest" description="7S domain">
    <location>
        <begin position="23"/>
        <end position="46"/>
    </location>
</feature>
<feature type="region of interest" description="Triple-helical region">
    <location>
        <begin position="47"/>
        <end position="1463"/>
    </location>
</feature>
<feature type="region of interest" description="Disordered" evidence="4">
    <location>
        <begin position="108"/>
        <end position="338"/>
    </location>
</feature>
<feature type="region of interest" description="Disordered" evidence="4">
    <location>
        <begin position="404"/>
        <end position="473"/>
    </location>
</feature>
<feature type="region of interest" description="Disordered" evidence="4">
    <location>
        <begin position="486"/>
        <end position="881"/>
    </location>
</feature>
<feature type="region of interest" description="Disordered" evidence="4">
    <location>
        <begin position="915"/>
        <end position="1099"/>
    </location>
</feature>
<feature type="region of interest" description="Disordered" evidence="4">
    <location>
        <begin position="1185"/>
        <end position="1459"/>
    </location>
</feature>
<feature type="short sequence motif" description="Cell attachment site" evidence="2">
    <location>
        <begin position="515"/>
        <end position="517"/>
    </location>
</feature>
<feature type="short sequence motif" description="Cell attachment site" evidence="2">
    <location>
        <begin position="560"/>
        <end position="562"/>
    </location>
</feature>
<feature type="short sequence motif" description="Cell attachment site" evidence="2">
    <location>
        <begin position="986"/>
        <end position="988"/>
    </location>
</feature>
<feature type="compositionally biased region" description="Low complexity" evidence="4">
    <location>
        <begin position="185"/>
        <end position="197"/>
    </location>
</feature>
<feature type="compositionally biased region" description="Pro residues" evidence="4">
    <location>
        <begin position="198"/>
        <end position="213"/>
    </location>
</feature>
<feature type="compositionally biased region" description="Low complexity" evidence="4">
    <location>
        <begin position="311"/>
        <end position="320"/>
    </location>
</feature>
<feature type="compositionally biased region" description="Low complexity" evidence="4">
    <location>
        <begin position="421"/>
        <end position="431"/>
    </location>
</feature>
<feature type="compositionally biased region" description="Pro residues" evidence="4">
    <location>
        <begin position="432"/>
        <end position="443"/>
    </location>
</feature>
<feature type="compositionally biased region" description="Pro residues" evidence="4">
    <location>
        <begin position="491"/>
        <end position="502"/>
    </location>
</feature>
<feature type="compositionally biased region" description="Low complexity" evidence="4">
    <location>
        <begin position="503"/>
        <end position="512"/>
    </location>
</feature>
<feature type="compositionally biased region" description="Low complexity" evidence="4">
    <location>
        <begin position="526"/>
        <end position="541"/>
    </location>
</feature>
<feature type="compositionally biased region" description="Gly residues" evidence="4">
    <location>
        <begin position="588"/>
        <end position="599"/>
    </location>
</feature>
<feature type="compositionally biased region" description="Low complexity" evidence="4">
    <location>
        <begin position="641"/>
        <end position="652"/>
    </location>
</feature>
<feature type="compositionally biased region" description="Low complexity" evidence="4">
    <location>
        <begin position="660"/>
        <end position="703"/>
    </location>
</feature>
<feature type="compositionally biased region" description="Low complexity" evidence="4">
    <location>
        <begin position="722"/>
        <end position="735"/>
    </location>
</feature>
<feature type="compositionally biased region" description="Low complexity" evidence="4">
    <location>
        <begin position="802"/>
        <end position="820"/>
    </location>
</feature>
<feature type="compositionally biased region" description="Basic residues" evidence="4">
    <location>
        <begin position="842"/>
        <end position="851"/>
    </location>
</feature>
<feature type="compositionally biased region" description="Low complexity" evidence="4">
    <location>
        <begin position="853"/>
        <end position="878"/>
    </location>
</feature>
<feature type="compositionally biased region" description="Low complexity" evidence="4">
    <location>
        <begin position="1055"/>
        <end position="1068"/>
    </location>
</feature>
<feature type="compositionally biased region" description="Gly residues" evidence="4">
    <location>
        <begin position="1210"/>
        <end position="1220"/>
    </location>
</feature>
<feature type="compositionally biased region" description="Low complexity" evidence="4">
    <location>
        <begin position="1234"/>
        <end position="1253"/>
    </location>
</feature>
<feature type="compositionally biased region" description="Pro residues" evidence="4">
    <location>
        <begin position="1275"/>
        <end position="1284"/>
    </location>
</feature>
<feature type="compositionally biased region" description="Polar residues" evidence="4">
    <location>
        <begin position="1360"/>
        <end position="1371"/>
    </location>
</feature>
<feature type="compositionally biased region" description="Low complexity" evidence="4">
    <location>
        <begin position="1384"/>
        <end position="1397"/>
    </location>
</feature>
<feature type="compositionally biased region" description="Low complexity" evidence="4">
    <location>
        <begin position="1429"/>
        <end position="1459"/>
    </location>
</feature>
<feature type="glycosylation site" description="N-linked (GlcNAc...) asparagine" evidence="2">
    <location>
        <position position="127"/>
    </location>
</feature>
<feature type="disulfide bond" description="Or C-1482 with C-1568" evidence="3">
    <location>
        <begin position="1482"/>
        <end position="1571"/>
    </location>
</feature>
<feature type="disulfide bond" description="Or C-1515 with C-1571" evidence="3">
    <location>
        <begin position="1515"/>
        <end position="1568"/>
    </location>
</feature>
<feature type="disulfide bond" evidence="3">
    <location>
        <begin position="1527"/>
        <end position="1533"/>
    </location>
</feature>
<feature type="disulfide bond" description="Or C-1590 with C-1684" evidence="3">
    <location>
        <begin position="1590"/>
        <end position="1687"/>
    </location>
</feature>
<feature type="disulfide bond" description="Or C-1624 with C-1687" evidence="3">
    <location>
        <begin position="1624"/>
        <end position="1684"/>
    </location>
</feature>
<feature type="disulfide bond" evidence="3">
    <location>
        <begin position="1636"/>
        <end position="1643"/>
    </location>
</feature>
<feature type="splice variant" id="VSP_001174" description="In isoform B." evidence="8">
    <original>MLINK</original>
    <variation>MHPG</variation>
    <location>
        <begin position="1"/>
        <end position="5"/>
    </location>
</feature>
<feature type="sequence variant" id="VAR_015216" description="In dbSNP:rs1042065." evidence="7">
    <original>S</original>
    <variation>A</variation>
    <location>
        <position position="455"/>
    </location>
</feature>
<feature type="sequence variant" id="VAR_059242" description="In dbSNP:rs1042065.">
    <original>S</original>
    <variation>P</variation>
    <location>
        <position position="455"/>
    </location>
</feature>
<feature type="sequence variant" id="VAR_070936" description="In DFNX6; dbSNP:rs779748859." evidence="6">
    <original>G</original>
    <variation>S</variation>
    <location>
        <position position="591"/>
    </location>
</feature>
<feature type="sequence variant" id="VAR_015217" description="In dbSNP:rs1042067." evidence="7">
    <original>N</original>
    <variation>K</variation>
    <location>
        <position position="1110"/>
    </location>
</feature>
<feature type="sequence variant" id="VAR_032972" description="In dbSNP:rs35179844.">
    <original>P</original>
    <variation>S</variation>
    <location>
        <position position="1126"/>
    </location>
</feature>
<feature type="sequence variant" id="VAR_035748" description="In a colorectal cancer sample; somatic mutation." evidence="5">
    <original>G</original>
    <variation>E</variation>
    <location>
        <position position="1130"/>
    </location>
</feature>
<feature type="sequence variant" id="VAR_032973" description="In dbSNP:rs34466065.">
    <original>I</original>
    <variation>V</variation>
    <location>
        <position position="1162"/>
    </location>
</feature>
<feature type="sequence variant" id="VAR_032974" description="In dbSNP:rs35363062.">
    <original>L</original>
    <variation>P</variation>
    <location>
        <position position="1362"/>
    </location>
</feature>
<feature type="sequence conflict" description="In Ref. 2; AAA19569 and 5; AAA16338." evidence="9" ref="2 5">
    <original>M</original>
    <variation>I</variation>
    <location>
        <position position="170"/>
    </location>
</feature>
<feature type="sequence conflict" description="In Ref. 3; AAB19038/AAB19039." evidence="9" ref="3">
    <original>IS</original>
    <variation>LR</variation>
    <location>
        <begin position="272"/>
        <end position="273"/>
    </location>
</feature>
<feature type="sequence conflict" description="In Ref. 3; AAB19038/AAB19039." evidence="9" ref="3">
    <original>V</original>
    <variation>D</variation>
    <location>
        <position position="366"/>
    </location>
</feature>
<feature type="sequence conflict" description="In Ref. 3; AAB19038/AAB19039." evidence="9" ref="3">
    <original>R</original>
    <variation>Q</variation>
    <location>
        <position position="518"/>
    </location>
</feature>
<feature type="sequence conflict" description="In Ref. 1; BAA04809 and 3; AAB19038/AAB19039." evidence="9" ref="1 3">
    <original>P</original>
    <variation>S</variation>
    <location>
        <position position="917"/>
    </location>
</feature>
<feature type="sequence conflict" description="In Ref. 1; BAA04809." evidence="9" ref="1">
    <location>
        <begin position="1302"/>
        <end position="1313"/>
    </location>
</feature>
<feature type="sequence conflict" description="In Ref. 1; BAA04809." evidence="9" ref="1">
    <original>P</original>
    <variation>A</variation>
    <location>
        <position position="1356"/>
    </location>
</feature>
<feature type="sequence conflict" description="In Ref. 3; AAB19038/AAB19039." evidence="9" ref="3">
    <original>D</original>
    <variation>H</variation>
    <location>
        <position position="1365"/>
    </location>
</feature>
<keyword id="KW-0025">Alternative splicing</keyword>
<keyword id="KW-0084">Basement membrane</keyword>
<keyword id="KW-0130">Cell adhesion</keyword>
<keyword id="KW-0160">Chromosomal rearrangement</keyword>
<keyword id="KW-0176">Collagen</keyword>
<keyword id="KW-0209">Deafness</keyword>
<keyword id="KW-0225">Disease variant</keyword>
<keyword id="KW-1015">Disulfide bond</keyword>
<keyword id="KW-0272">Extracellular matrix</keyword>
<keyword id="KW-0325">Glycoprotein</keyword>
<keyword id="KW-0379">Hydroxylation</keyword>
<keyword id="KW-1010">Non-syndromic deafness</keyword>
<keyword id="KW-1267">Proteomics identification</keyword>
<keyword id="KW-1185">Reference proteome</keyword>
<keyword id="KW-0677">Repeat</keyword>
<keyword id="KW-0964">Secreted</keyword>
<keyword id="KW-0732">Signal</keyword>
<dbReference type="EMBL" id="D21337">
    <property type="protein sequence ID" value="BAA04809.1"/>
    <property type="molecule type" value="mRNA"/>
</dbReference>
<dbReference type="EMBL" id="U04845">
    <property type="protein sequence ID" value="AAA19569.2"/>
    <property type="molecule type" value="mRNA"/>
</dbReference>
<dbReference type="EMBL" id="U47004">
    <property type="protein sequence ID" value="AAB19038.1"/>
    <property type="molecule type" value="Genomic_DNA"/>
</dbReference>
<dbReference type="EMBL" id="U46959">
    <property type="protein sequence ID" value="AAB19038.1"/>
    <property type="status" value="JOINED"/>
    <property type="molecule type" value="Genomic_DNA"/>
</dbReference>
<dbReference type="EMBL" id="U46961">
    <property type="protein sequence ID" value="AAB19038.1"/>
    <property type="status" value="JOINED"/>
    <property type="molecule type" value="Genomic_DNA"/>
</dbReference>
<dbReference type="EMBL" id="U46962">
    <property type="protein sequence ID" value="AAB19038.1"/>
    <property type="status" value="JOINED"/>
    <property type="molecule type" value="Genomic_DNA"/>
</dbReference>
<dbReference type="EMBL" id="U46963">
    <property type="protein sequence ID" value="AAB19038.1"/>
    <property type="status" value="JOINED"/>
    <property type="molecule type" value="Genomic_DNA"/>
</dbReference>
<dbReference type="EMBL" id="U46964">
    <property type="protein sequence ID" value="AAB19038.1"/>
    <property type="status" value="JOINED"/>
    <property type="molecule type" value="Genomic_DNA"/>
</dbReference>
<dbReference type="EMBL" id="U46965">
    <property type="protein sequence ID" value="AAB19038.1"/>
    <property type="status" value="JOINED"/>
    <property type="molecule type" value="Genomic_DNA"/>
</dbReference>
<dbReference type="EMBL" id="U46966">
    <property type="protein sequence ID" value="AAB19038.1"/>
    <property type="status" value="JOINED"/>
    <property type="molecule type" value="Genomic_DNA"/>
</dbReference>
<dbReference type="EMBL" id="U46967">
    <property type="protein sequence ID" value="AAB19038.1"/>
    <property type="status" value="JOINED"/>
    <property type="molecule type" value="Genomic_DNA"/>
</dbReference>
<dbReference type="EMBL" id="U46968">
    <property type="protein sequence ID" value="AAB19038.1"/>
    <property type="status" value="JOINED"/>
    <property type="molecule type" value="Genomic_DNA"/>
</dbReference>
<dbReference type="EMBL" id="U46969">
    <property type="protein sequence ID" value="AAB19038.1"/>
    <property type="status" value="JOINED"/>
    <property type="molecule type" value="Genomic_DNA"/>
</dbReference>
<dbReference type="EMBL" id="U46970">
    <property type="protein sequence ID" value="AAB19038.1"/>
    <property type="status" value="JOINED"/>
    <property type="molecule type" value="Genomic_DNA"/>
</dbReference>
<dbReference type="EMBL" id="U46971">
    <property type="protein sequence ID" value="AAB19038.1"/>
    <property type="status" value="JOINED"/>
    <property type="molecule type" value="Genomic_DNA"/>
</dbReference>
<dbReference type="EMBL" id="U46972">
    <property type="protein sequence ID" value="AAB19038.1"/>
    <property type="status" value="JOINED"/>
    <property type="molecule type" value="Genomic_DNA"/>
</dbReference>
<dbReference type="EMBL" id="U46973">
    <property type="protein sequence ID" value="AAB19038.1"/>
    <property type="status" value="JOINED"/>
    <property type="molecule type" value="Genomic_DNA"/>
</dbReference>
<dbReference type="EMBL" id="U46974">
    <property type="protein sequence ID" value="AAB19038.1"/>
    <property type="status" value="JOINED"/>
    <property type="molecule type" value="Genomic_DNA"/>
</dbReference>
<dbReference type="EMBL" id="U46975">
    <property type="protein sequence ID" value="AAB19038.1"/>
    <property type="status" value="JOINED"/>
    <property type="molecule type" value="Genomic_DNA"/>
</dbReference>
<dbReference type="EMBL" id="U46976">
    <property type="protein sequence ID" value="AAB19038.1"/>
    <property type="status" value="JOINED"/>
    <property type="molecule type" value="Genomic_DNA"/>
</dbReference>
<dbReference type="EMBL" id="U46977">
    <property type="protein sequence ID" value="AAB19038.1"/>
    <property type="status" value="JOINED"/>
    <property type="molecule type" value="Genomic_DNA"/>
</dbReference>
<dbReference type="EMBL" id="U46978">
    <property type="protein sequence ID" value="AAB19038.1"/>
    <property type="status" value="JOINED"/>
    <property type="molecule type" value="Genomic_DNA"/>
</dbReference>
<dbReference type="EMBL" id="U46979">
    <property type="protein sequence ID" value="AAB19038.1"/>
    <property type="status" value="JOINED"/>
    <property type="molecule type" value="Genomic_DNA"/>
</dbReference>
<dbReference type="EMBL" id="U46980">
    <property type="protein sequence ID" value="AAB19038.1"/>
    <property type="status" value="JOINED"/>
    <property type="molecule type" value="Genomic_DNA"/>
</dbReference>
<dbReference type="EMBL" id="U46981">
    <property type="protein sequence ID" value="AAB19038.1"/>
    <property type="status" value="JOINED"/>
    <property type="molecule type" value="Genomic_DNA"/>
</dbReference>
<dbReference type="EMBL" id="U46982">
    <property type="protein sequence ID" value="AAB19038.1"/>
    <property type="status" value="JOINED"/>
    <property type="molecule type" value="Genomic_DNA"/>
</dbReference>
<dbReference type="EMBL" id="U46983">
    <property type="protein sequence ID" value="AAB19038.1"/>
    <property type="status" value="JOINED"/>
    <property type="molecule type" value="Genomic_DNA"/>
</dbReference>
<dbReference type="EMBL" id="U46984">
    <property type="protein sequence ID" value="AAB19038.1"/>
    <property type="status" value="JOINED"/>
    <property type="molecule type" value="Genomic_DNA"/>
</dbReference>
<dbReference type="EMBL" id="U46985">
    <property type="protein sequence ID" value="AAB19038.1"/>
    <property type="status" value="JOINED"/>
    <property type="molecule type" value="Genomic_DNA"/>
</dbReference>
<dbReference type="EMBL" id="U46986">
    <property type="protein sequence ID" value="AAB19038.1"/>
    <property type="status" value="JOINED"/>
    <property type="molecule type" value="Genomic_DNA"/>
</dbReference>
<dbReference type="EMBL" id="U46987">
    <property type="protein sequence ID" value="AAB19038.1"/>
    <property type="status" value="JOINED"/>
    <property type="molecule type" value="Genomic_DNA"/>
</dbReference>
<dbReference type="EMBL" id="U46988">
    <property type="protein sequence ID" value="AAB19038.1"/>
    <property type="status" value="JOINED"/>
    <property type="molecule type" value="Genomic_DNA"/>
</dbReference>
<dbReference type="EMBL" id="U46989">
    <property type="protein sequence ID" value="AAB19038.1"/>
    <property type="status" value="JOINED"/>
    <property type="molecule type" value="Genomic_DNA"/>
</dbReference>
<dbReference type="EMBL" id="U46990">
    <property type="protein sequence ID" value="AAB19038.1"/>
    <property type="status" value="JOINED"/>
    <property type="molecule type" value="Genomic_DNA"/>
</dbReference>
<dbReference type="EMBL" id="U46991">
    <property type="protein sequence ID" value="AAB19038.1"/>
    <property type="status" value="JOINED"/>
    <property type="molecule type" value="Genomic_DNA"/>
</dbReference>
<dbReference type="EMBL" id="U46992">
    <property type="protein sequence ID" value="AAB19038.1"/>
    <property type="status" value="JOINED"/>
    <property type="molecule type" value="Genomic_DNA"/>
</dbReference>
<dbReference type="EMBL" id="U46993">
    <property type="protein sequence ID" value="AAB19038.1"/>
    <property type="status" value="JOINED"/>
    <property type="molecule type" value="Genomic_DNA"/>
</dbReference>
<dbReference type="EMBL" id="U46994">
    <property type="protein sequence ID" value="AAB19038.1"/>
    <property type="status" value="JOINED"/>
    <property type="molecule type" value="Genomic_DNA"/>
</dbReference>
<dbReference type="EMBL" id="U46995">
    <property type="protein sequence ID" value="AAB19038.1"/>
    <property type="status" value="JOINED"/>
    <property type="molecule type" value="Genomic_DNA"/>
</dbReference>
<dbReference type="EMBL" id="U46996">
    <property type="protein sequence ID" value="AAB19038.1"/>
    <property type="status" value="JOINED"/>
    <property type="molecule type" value="Genomic_DNA"/>
</dbReference>
<dbReference type="EMBL" id="U46997">
    <property type="protein sequence ID" value="AAB19038.1"/>
    <property type="status" value="JOINED"/>
    <property type="molecule type" value="Genomic_DNA"/>
</dbReference>
<dbReference type="EMBL" id="U46998">
    <property type="protein sequence ID" value="AAB19038.1"/>
    <property type="status" value="JOINED"/>
    <property type="molecule type" value="Genomic_DNA"/>
</dbReference>
<dbReference type="EMBL" id="U46999">
    <property type="protein sequence ID" value="AAB19038.1"/>
    <property type="status" value="JOINED"/>
    <property type="molecule type" value="Genomic_DNA"/>
</dbReference>
<dbReference type="EMBL" id="U47000">
    <property type="protein sequence ID" value="AAB19038.1"/>
    <property type="status" value="JOINED"/>
    <property type="molecule type" value="Genomic_DNA"/>
</dbReference>
<dbReference type="EMBL" id="U47001">
    <property type="protein sequence ID" value="AAB19038.1"/>
    <property type="status" value="JOINED"/>
    <property type="molecule type" value="Genomic_DNA"/>
</dbReference>
<dbReference type="EMBL" id="U47002">
    <property type="protein sequence ID" value="AAB19038.1"/>
    <property type="status" value="JOINED"/>
    <property type="molecule type" value="Genomic_DNA"/>
</dbReference>
<dbReference type="EMBL" id="U47003">
    <property type="protein sequence ID" value="AAB19038.1"/>
    <property type="status" value="JOINED"/>
    <property type="molecule type" value="Genomic_DNA"/>
</dbReference>
<dbReference type="EMBL" id="U47004">
    <property type="protein sequence ID" value="AAB19039.1"/>
    <property type="molecule type" value="Genomic_DNA"/>
</dbReference>
<dbReference type="EMBL" id="U46960">
    <property type="protein sequence ID" value="AAB19039.1"/>
    <property type="status" value="JOINED"/>
    <property type="molecule type" value="Genomic_DNA"/>
</dbReference>
<dbReference type="EMBL" id="U46961">
    <property type="protein sequence ID" value="AAB19039.1"/>
    <property type="status" value="JOINED"/>
    <property type="molecule type" value="Genomic_DNA"/>
</dbReference>
<dbReference type="EMBL" id="U46962">
    <property type="protein sequence ID" value="AAB19039.1"/>
    <property type="status" value="JOINED"/>
    <property type="molecule type" value="Genomic_DNA"/>
</dbReference>
<dbReference type="EMBL" id="U46963">
    <property type="protein sequence ID" value="AAB19039.1"/>
    <property type="status" value="JOINED"/>
    <property type="molecule type" value="Genomic_DNA"/>
</dbReference>
<dbReference type="EMBL" id="U46964">
    <property type="protein sequence ID" value="AAB19039.1"/>
    <property type="status" value="JOINED"/>
    <property type="molecule type" value="Genomic_DNA"/>
</dbReference>
<dbReference type="EMBL" id="U46965">
    <property type="protein sequence ID" value="AAB19039.1"/>
    <property type="status" value="JOINED"/>
    <property type="molecule type" value="Genomic_DNA"/>
</dbReference>
<dbReference type="EMBL" id="U46966">
    <property type="protein sequence ID" value="AAB19039.1"/>
    <property type="status" value="JOINED"/>
    <property type="molecule type" value="Genomic_DNA"/>
</dbReference>
<dbReference type="EMBL" id="U46967">
    <property type="protein sequence ID" value="AAB19039.1"/>
    <property type="status" value="JOINED"/>
    <property type="molecule type" value="Genomic_DNA"/>
</dbReference>
<dbReference type="EMBL" id="U46968">
    <property type="protein sequence ID" value="AAB19039.1"/>
    <property type="status" value="JOINED"/>
    <property type="molecule type" value="Genomic_DNA"/>
</dbReference>
<dbReference type="EMBL" id="U46969">
    <property type="protein sequence ID" value="AAB19039.1"/>
    <property type="status" value="JOINED"/>
    <property type="molecule type" value="Genomic_DNA"/>
</dbReference>
<dbReference type="EMBL" id="U46970">
    <property type="protein sequence ID" value="AAB19039.1"/>
    <property type="status" value="JOINED"/>
    <property type="molecule type" value="Genomic_DNA"/>
</dbReference>
<dbReference type="EMBL" id="U46971">
    <property type="protein sequence ID" value="AAB19039.1"/>
    <property type="status" value="JOINED"/>
    <property type="molecule type" value="Genomic_DNA"/>
</dbReference>
<dbReference type="EMBL" id="U46972">
    <property type="protein sequence ID" value="AAB19039.1"/>
    <property type="status" value="JOINED"/>
    <property type="molecule type" value="Genomic_DNA"/>
</dbReference>
<dbReference type="EMBL" id="U46973">
    <property type="protein sequence ID" value="AAB19039.1"/>
    <property type="status" value="JOINED"/>
    <property type="molecule type" value="Genomic_DNA"/>
</dbReference>
<dbReference type="EMBL" id="U46974">
    <property type="protein sequence ID" value="AAB19039.1"/>
    <property type="status" value="JOINED"/>
    <property type="molecule type" value="Genomic_DNA"/>
</dbReference>
<dbReference type="EMBL" id="U46975">
    <property type="protein sequence ID" value="AAB19039.1"/>
    <property type="status" value="JOINED"/>
    <property type="molecule type" value="Genomic_DNA"/>
</dbReference>
<dbReference type="EMBL" id="U46976">
    <property type="protein sequence ID" value="AAB19039.1"/>
    <property type="status" value="JOINED"/>
    <property type="molecule type" value="Genomic_DNA"/>
</dbReference>
<dbReference type="EMBL" id="U46977">
    <property type="protein sequence ID" value="AAB19039.1"/>
    <property type="status" value="JOINED"/>
    <property type="molecule type" value="Genomic_DNA"/>
</dbReference>
<dbReference type="EMBL" id="U46978">
    <property type="protein sequence ID" value="AAB19039.1"/>
    <property type="status" value="JOINED"/>
    <property type="molecule type" value="Genomic_DNA"/>
</dbReference>
<dbReference type="EMBL" id="U46979">
    <property type="protein sequence ID" value="AAB19039.1"/>
    <property type="status" value="JOINED"/>
    <property type="molecule type" value="Genomic_DNA"/>
</dbReference>
<dbReference type="EMBL" id="U46980">
    <property type="protein sequence ID" value="AAB19039.1"/>
    <property type="status" value="JOINED"/>
    <property type="molecule type" value="Genomic_DNA"/>
</dbReference>
<dbReference type="EMBL" id="U46981">
    <property type="protein sequence ID" value="AAB19039.1"/>
    <property type="status" value="JOINED"/>
    <property type="molecule type" value="Genomic_DNA"/>
</dbReference>
<dbReference type="EMBL" id="U46982">
    <property type="protein sequence ID" value="AAB19039.1"/>
    <property type="status" value="JOINED"/>
    <property type="molecule type" value="Genomic_DNA"/>
</dbReference>
<dbReference type="EMBL" id="U46983">
    <property type="protein sequence ID" value="AAB19039.1"/>
    <property type="status" value="JOINED"/>
    <property type="molecule type" value="Genomic_DNA"/>
</dbReference>
<dbReference type="EMBL" id="U46984">
    <property type="protein sequence ID" value="AAB19039.1"/>
    <property type="status" value="JOINED"/>
    <property type="molecule type" value="Genomic_DNA"/>
</dbReference>
<dbReference type="EMBL" id="U46985">
    <property type="protein sequence ID" value="AAB19039.1"/>
    <property type="status" value="JOINED"/>
    <property type="molecule type" value="Genomic_DNA"/>
</dbReference>
<dbReference type="EMBL" id="U46986">
    <property type="protein sequence ID" value="AAB19039.1"/>
    <property type="status" value="JOINED"/>
    <property type="molecule type" value="Genomic_DNA"/>
</dbReference>
<dbReference type="EMBL" id="U46987">
    <property type="protein sequence ID" value="AAB19039.1"/>
    <property type="status" value="JOINED"/>
    <property type="molecule type" value="Genomic_DNA"/>
</dbReference>
<dbReference type="EMBL" id="U46988">
    <property type="protein sequence ID" value="AAB19039.1"/>
    <property type="status" value="JOINED"/>
    <property type="molecule type" value="Genomic_DNA"/>
</dbReference>
<dbReference type="EMBL" id="U46989">
    <property type="protein sequence ID" value="AAB19039.1"/>
    <property type="status" value="JOINED"/>
    <property type="molecule type" value="Genomic_DNA"/>
</dbReference>
<dbReference type="EMBL" id="U46990">
    <property type="protein sequence ID" value="AAB19039.1"/>
    <property type="status" value="JOINED"/>
    <property type="molecule type" value="Genomic_DNA"/>
</dbReference>
<dbReference type="EMBL" id="U46991">
    <property type="protein sequence ID" value="AAB19039.1"/>
    <property type="status" value="JOINED"/>
    <property type="molecule type" value="Genomic_DNA"/>
</dbReference>
<dbReference type="EMBL" id="U46992">
    <property type="protein sequence ID" value="AAB19039.1"/>
    <property type="status" value="JOINED"/>
    <property type="molecule type" value="Genomic_DNA"/>
</dbReference>
<dbReference type="EMBL" id="U46993">
    <property type="protein sequence ID" value="AAB19039.1"/>
    <property type="status" value="JOINED"/>
    <property type="molecule type" value="Genomic_DNA"/>
</dbReference>
<dbReference type="EMBL" id="U46994">
    <property type="protein sequence ID" value="AAB19039.1"/>
    <property type="status" value="JOINED"/>
    <property type="molecule type" value="Genomic_DNA"/>
</dbReference>
<dbReference type="EMBL" id="U46995">
    <property type="protein sequence ID" value="AAB19039.1"/>
    <property type="status" value="JOINED"/>
    <property type="molecule type" value="Genomic_DNA"/>
</dbReference>
<dbReference type="EMBL" id="U46996">
    <property type="protein sequence ID" value="AAB19039.1"/>
    <property type="status" value="JOINED"/>
    <property type="molecule type" value="Genomic_DNA"/>
</dbReference>
<dbReference type="EMBL" id="U46997">
    <property type="protein sequence ID" value="AAB19039.1"/>
    <property type="status" value="JOINED"/>
    <property type="molecule type" value="Genomic_DNA"/>
</dbReference>
<dbReference type="EMBL" id="U46998">
    <property type="protein sequence ID" value="AAB19039.1"/>
    <property type="status" value="JOINED"/>
    <property type="molecule type" value="Genomic_DNA"/>
</dbReference>
<dbReference type="EMBL" id="U46999">
    <property type="protein sequence ID" value="AAB19039.1"/>
    <property type="status" value="JOINED"/>
    <property type="molecule type" value="Genomic_DNA"/>
</dbReference>
<dbReference type="EMBL" id="U47000">
    <property type="protein sequence ID" value="AAB19039.1"/>
    <property type="status" value="JOINED"/>
    <property type="molecule type" value="Genomic_DNA"/>
</dbReference>
<dbReference type="EMBL" id="U47001">
    <property type="protein sequence ID" value="AAB19039.1"/>
    <property type="status" value="JOINED"/>
    <property type="molecule type" value="Genomic_DNA"/>
</dbReference>
<dbReference type="EMBL" id="U47002">
    <property type="protein sequence ID" value="AAB19039.1"/>
    <property type="status" value="JOINED"/>
    <property type="molecule type" value="Genomic_DNA"/>
</dbReference>
<dbReference type="EMBL" id="U47003">
    <property type="protein sequence ID" value="AAB19039.1"/>
    <property type="status" value="JOINED"/>
    <property type="molecule type" value="Genomic_DNA"/>
</dbReference>
<dbReference type="EMBL" id="AL136080">
    <property type="status" value="NOT_ANNOTATED_CDS"/>
    <property type="molecule type" value="Genomic_DNA"/>
</dbReference>
<dbReference type="EMBL" id="AL034369">
    <property type="status" value="NOT_ANNOTATED_CDS"/>
    <property type="molecule type" value="Genomic_DNA"/>
</dbReference>
<dbReference type="EMBL" id="AL109943">
    <property type="status" value="NOT_ANNOTATED_CDS"/>
    <property type="molecule type" value="Genomic_DNA"/>
</dbReference>
<dbReference type="EMBL" id="AL031177">
    <property type="status" value="NOT_ANNOTATED_CDS"/>
    <property type="molecule type" value="Genomic_DNA"/>
</dbReference>
<dbReference type="EMBL" id="CH471120">
    <property type="protein sequence ID" value="EAX02688.1"/>
    <property type="molecule type" value="Genomic_DNA"/>
</dbReference>
<dbReference type="EMBL" id="L22763">
    <property type="protein sequence ID" value="AAA16338.1"/>
    <property type="molecule type" value="mRNA"/>
</dbReference>
<dbReference type="CCDS" id="CCDS14541.1">
    <molecule id="Q14031-1"/>
</dbReference>
<dbReference type="CCDS" id="CCDS14542.1">
    <molecule id="Q14031-2"/>
</dbReference>
<dbReference type="PIR" id="A54122">
    <property type="entry name" value="CGHU6B"/>
</dbReference>
<dbReference type="RefSeq" id="NP_001274689.1">
    <property type="nucleotide sequence ID" value="NM_001287760.1"/>
</dbReference>
<dbReference type="RefSeq" id="NP_001838.2">
    <molecule id="Q14031-1"/>
    <property type="nucleotide sequence ID" value="NM_001847.4"/>
</dbReference>
<dbReference type="RefSeq" id="NP_378667.1">
    <molecule id="Q14031-2"/>
    <property type="nucleotide sequence ID" value="NM_033641.4"/>
</dbReference>
<dbReference type="SMR" id="Q14031"/>
<dbReference type="BioGRID" id="107685">
    <property type="interactions" value="18"/>
</dbReference>
<dbReference type="ComplexPortal" id="CPX-1724">
    <property type="entry name" value="Collagen type IV trimer variant 2"/>
</dbReference>
<dbReference type="FunCoup" id="Q14031">
    <property type="interactions" value="633"/>
</dbReference>
<dbReference type="IntAct" id="Q14031">
    <property type="interactions" value="13"/>
</dbReference>
<dbReference type="MINT" id="Q14031"/>
<dbReference type="STRING" id="9606.ENSP00000378340"/>
<dbReference type="ChEMBL" id="CHEMBL2364188"/>
<dbReference type="GlyCosmos" id="Q14031">
    <property type="glycosylation" value="2 sites, 1 glycan"/>
</dbReference>
<dbReference type="GlyGen" id="Q14031">
    <property type="glycosylation" value="11 sites, 1 O-linked glycan (6 sites)"/>
</dbReference>
<dbReference type="iPTMnet" id="Q14031"/>
<dbReference type="PhosphoSitePlus" id="Q14031"/>
<dbReference type="BioMuta" id="COL4A6"/>
<dbReference type="DMDM" id="116241307"/>
<dbReference type="jPOST" id="Q14031"/>
<dbReference type="MassIVE" id="Q14031"/>
<dbReference type="PaxDb" id="9606-ENSP00000378340"/>
<dbReference type="PeptideAtlas" id="Q14031"/>
<dbReference type="ProteomicsDB" id="59800">
    <molecule id="Q14031-1"/>
</dbReference>
<dbReference type="ProteomicsDB" id="59801">
    <molecule id="Q14031-2"/>
</dbReference>
<dbReference type="Pumba" id="Q14031"/>
<dbReference type="Antibodypedia" id="29421">
    <property type="antibodies" value="198 antibodies from 28 providers"/>
</dbReference>
<dbReference type="DNASU" id="1288"/>
<dbReference type="Ensembl" id="ENST00000334504.12">
    <molecule id="Q14031-2"/>
    <property type="protein sequence ID" value="ENSP00000334733.7"/>
    <property type="gene ID" value="ENSG00000197565.17"/>
</dbReference>
<dbReference type="Ensembl" id="ENST00000372216.8">
    <molecule id="Q14031-1"/>
    <property type="protein sequence ID" value="ENSP00000361290.4"/>
    <property type="gene ID" value="ENSG00000197565.17"/>
</dbReference>
<dbReference type="GeneID" id="1288"/>
<dbReference type="KEGG" id="hsa:1288"/>
<dbReference type="MANE-Select" id="ENST00000334504.12">
    <molecule id="Q14031-2"/>
    <property type="protein sequence ID" value="ENSP00000334733.7"/>
    <property type="RefSeq nucleotide sequence ID" value="NM_033641.4"/>
    <property type="RefSeq protein sequence ID" value="NP_378667.1"/>
</dbReference>
<dbReference type="UCSC" id="uc004env.5">
    <molecule id="Q14031-1"/>
    <property type="organism name" value="human"/>
</dbReference>
<dbReference type="AGR" id="HGNC:2208"/>
<dbReference type="CTD" id="1288"/>
<dbReference type="DisGeNET" id="1288"/>
<dbReference type="GeneCards" id="COL4A6"/>
<dbReference type="HGNC" id="HGNC:2208">
    <property type="gene designation" value="COL4A6"/>
</dbReference>
<dbReference type="HPA" id="ENSG00000197565">
    <property type="expression patterns" value="Tissue enhanced (endometrium, urinary bladder)"/>
</dbReference>
<dbReference type="MalaCards" id="COL4A6"/>
<dbReference type="MIM" id="300914">
    <property type="type" value="phenotype"/>
</dbReference>
<dbReference type="MIM" id="303631">
    <property type="type" value="gene"/>
</dbReference>
<dbReference type="neXtProt" id="NX_Q14031"/>
<dbReference type="OpenTargets" id="ENSG00000197565"/>
<dbReference type="Orphanet" id="90625">
    <property type="disease" value="Rare X-linked non-syndromic sensorineural deafness type DFN"/>
</dbReference>
<dbReference type="Orphanet" id="1018">
    <property type="disease" value="X-linked Alport syndrome-diffuse leiomyomatosis"/>
</dbReference>
<dbReference type="PharmGKB" id="PA26723"/>
<dbReference type="VEuPathDB" id="HostDB:ENSG00000197565"/>
<dbReference type="eggNOG" id="KOG3544">
    <property type="taxonomic scope" value="Eukaryota"/>
</dbReference>
<dbReference type="GeneTree" id="ENSGT00940000153991"/>
<dbReference type="HOGENOM" id="CLU_002023_1_0_1"/>
<dbReference type="InParanoid" id="Q14031"/>
<dbReference type="OMA" id="GDQGQTF"/>
<dbReference type="OrthoDB" id="10071882at2759"/>
<dbReference type="PAN-GO" id="Q14031">
    <property type="GO annotations" value="6 GO annotations based on evolutionary models"/>
</dbReference>
<dbReference type="PhylomeDB" id="Q14031"/>
<dbReference type="TreeFam" id="TF344135"/>
<dbReference type="PathwayCommons" id="Q14031"/>
<dbReference type="Reactome" id="R-HSA-1442490">
    <property type="pathway name" value="Collagen degradation"/>
</dbReference>
<dbReference type="Reactome" id="R-HSA-1474244">
    <property type="pathway name" value="Extracellular matrix organization"/>
</dbReference>
<dbReference type="Reactome" id="R-HSA-1650814">
    <property type="pathway name" value="Collagen biosynthesis and modifying enzymes"/>
</dbReference>
<dbReference type="Reactome" id="R-HSA-2022090">
    <property type="pathway name" value="Assembly of collagen fibrils and other multimeric structures"/>
</dbReference>
<dbReference type="Reactome" id="R-HSA-216083">
    <property type="pathway name" value="Integrin cell surface interactions"/>
</dbReference>
<dbReference type="Reactome" id="R-HSA-2214320">
    <property type="pathway name" value="Anchoring fibril formation"/>
</dbReference>
<dbReference type="Reactome" id="R-HSA-2243919">
    <property type="pathway name" value="Crosslinking of collagen fibrils"/>
</dbReference>
<dbReference type="Reactome" id="R-HSA-3000157">
    <property type="pathway name" value="Laminin interactions"/>
</dbReference>
<dbReference type="Reactome" id="R-HSA-3000171">
    <property type="pathway name" value="Non-integrin membrane-ECM interactions"/>
</dbReference>
<dbReference type="Reactome" id="R-HSA-3000178">
    <property type="pathway name" value="ECM proteoglycans"/>
</dbReference>
<dbReference type="Reactome" id="R-HSA-8948216">
    <property type="pathway name" value="Collagen chain trimerization"/>
</dbReference>
<dbReference type="SignaLink" id="Q14031"/>
<dbReference type="SIGNOR" id="Q14031"/>
<dbReference type="BioGRID-ORCS" id="1288">
    <property type="hits" value="16 hits in 774 CRISPR screens"/>
</dbReference>
<dbReference type="ChiTaRS" id="COL4A6">
    <property type="organism name" value="human"/>
</dbReference>
<dbReference type="GeneWiki" id="COL4A6"/>
<dbReference type="GenomeRNAi" id="1288"/>
<dbReference type="Pharos" id="Q14031">
    <property type="development level" value="Tbio"/>
</dbReference>
<dbReference type="PRO" id="PR:Q14031"/>
<dbReference type="Proteomes" id="UP000005640">
    <property type="component" value="Chromosome X"/>
</dbReference>
<dbReference type="RNAct" id="Q14031">
    <property type="molecule type" value="protein"/>
</dbReference>
<dbReference type="Bgee" id="ENSG00000197565">
    <property type="expression patterns" value="Expressed in mucosa of stomach and 130 other cell types or tissues"/>
</dbReference>
<dbReference type="ExpressionAtlas" id="Q14031">
    <property type="expression patterns" value="baseline and differential"/>
</dbReference>
<dbReference type="GO" id="GO:0005587">
    <property type="term" value="C:collagen type IV trimer"/>
    <property type="evidence" value="ECO:0000318"/>
    <property type="project" value="GO_Central"/>
</dbReference>
<dbReference type="GO" id="GO:0062023">
    <property type="term" value="C:collagen-containing extracellular matrix"/>
    <property type="evidence" value="ECO:0007005"/>
    <property type="project" value="BHF-UCL"/>
</dbReference>
<dbReference type="GO" id="GO:0005788">
    <property type="term" value="C:endoplasmic reticulum lumen"/>
    <property type="evidence" value="ECO:0000304"/>
    <property type="project" value="Reactome"/>
</dbReference>
<dbReference type="GO" id="GO:0005576">
    <property type="term" value="C:extracellular region"/>
    <property type="evidence" value="ECO:0000304"/>
    <property type="project" value="Reactome"/>
</dbReference>
<dbReference type="GO" id="GO:0005615">
    <property type="term" value="C:extracellular space"/>
    <property type="evidence" value="ECO:0000318"/>
    <property type="project" value="GO_Central"/>
</dbReference>
<dbReference type="GO" id="GO:0030020">
    <property type="term" value="F:extracellular matrix structural constituent conferring tensile strength"/>
    <property type="evidence" value="ECO:0007005"/>
    <property type="project" value="BHF-UCL"/>
</dbReference>
<dbReference type="GO" id="GO:0007155">
    <property type="term" value="P:cell adhesion"/>
    <property type="evidence" value="ECO:0007669"/>
    <property type="project" value="UniProtKB-KW"/>
</dbReference>
<dbReference type="GO" id="GO:0071230">
    <property type="term" value="P:cellular response to amino acid stimulus"/>
    <property type="evidence" value="ECO:0007669"/>
    <property type="project" value="Ensembl"/>
</dbReference>
<dbReference type="GO" id="GO:0038063">
    <property type="term" value="P:collagen-activated tyrosine kinase receptor signaling pathway"/>
    <property type="evidence" value="ECO:0000318"/>
    <property type="project" value="GO_Central"/>
</dbReference>
<dbReference type="GO" id="GO:0030198">
    <property type="term" value="P:extracellular matrix organization"/>
    <property type="evidence" value="ECO:0007669"/>
    <property type="project" value="Ensembl"/>
</dbReference>
<dbReference type="FunFam" id="2.170.240.10:FF:000001">
    <property type="entry name" value="Collagen IV alpha 1 chain"/>
    <property type="match status" value="1"/>
</dbReference>
<dbReference type="Gene3D" id="2.170.240.10">
    <property type="entry name" value="Collagen IV, non-collagenous"/>
    <property type="match status" value="1"/>
</dbReference>
<dbReference type="InterPro" id="IPR008160">
    <property type="entry name" value="Collagen"/>
</dbReference>
<dbReference type="InterPro" id="IPR001442">
    <property type="entry name" value="Collagen_IV_NC"/>
</dbReference>
<dbReference type="InterPro" id="IPR036954">
    <property type="entry name" value="Collagen_IV_NC_sf"/>
</dbReference>
<dbReference type="InterPro" id="IPR050149">
    <property type="entry name" value="Collagen_superfamily"/>
</dbReference>
<dbReference type="InterPro" id="IPR016187">
    <property type="entry name" value="CTDL_fold"/>
</dbReference>
<dbReference type="PANTHER" id="PTHR24023:SF1112">
    <property type="entry name" value="COL_CUTICLE_N DOMAIN-CONTAINING PROTEIN-RELATED"/>
    <property type="match status" value="1"/>
</dbReference>
<dbReference type="PANTHER" id="PTHR24023">
    <property type="entry name" value="COLLAGEN ALPHA"/>
    <property type="match status" value="1"/>
</dbReference>
<dbReference type="Pfam" id="PF01413">
    <property type="entry name" value="C4"/>
    <property type="match status" value="2"/>
</dbReference>
<dbReference type="Pfam" id="PF01391">
    <property type="entry name" value="Collagen"/>
    <property type="match status" value="19"/>
</dbReference>
<dbReference type="SMART" id="SM00111">
    <property type="entry name" value="C4"/>
    <property type="match status" value="2"/>
</dbReference>
<dbReference type="SUPFAM" id="SSF56436">
    <property type="entry name" value="C-type lectin-like"/>
    <property type="match status" value="2"/>
</dbReference>
<dbReference type="PROSITE" id="PS51403">
    <property type="entry name" value="NC1_IV"/>
    <property type="match status" value="1"/>
</dbReference>
<accession>Q14031</accession>
<accession>Q12823</accession>
<accession>Q14053</accession>
<accession>Q5JYH6</accession>
<accession>Q5JYH8</accession>
<accession>Q9NQM5</accession>
<accession>Q9NTX3</accession>
<accession>Q9UJ76</accession>
<accession>Q9UMG6</accession>
<accession>Q9Y4L4</accession>
<sequence>MLINKLWLLLVTLCLTEELAAAGEKSYGKPCGGQDCSGSCQCFPEKGARGRPGPIGIQGPTGPQGFTGSTGLSGLKGERGFPGLLGPYGPKGDKGPMGVPGFLGINGIPGHPGQPGPRGPPGLDGCNGTQGAVGFPGPDGYPGLLGPPGLPGQKGSKGDPVLAPGSFKGMKGDPGLPGLDGITGPQGAPGFPGAVGPAGPPGLQGPPGPPGPLGPDGNMGLGFQGEKGVKGDVGLPGPAGPPPSTGELEFMGFPKGKKGSKGEPGPKGFPGISGPPGFPGLGTTGEKGEKGEKGIPGLPGPRGPMGSEGVQGPPGQQGKKGTLGFPGLNGFQGIEGQKGDIGLPGPDVFIDIDGAVISGNPGDPGVPGLPGLKGDEGIQGLRGPSGVPGLPALSGVPGALGPQGFPGLKGDQGNPGRTTIGAAGLPGRDGLPGPPGPPGPPSPEFETETLHNKESGFPGLRGEQGPKGNLGLKGIKGDSGFCACDGGVPNTGPPGEPGPPGPWGLIGLPGLKGARGDRGSGGAQGPAGAPGLVGPLGPSGPKGKKGEPILSTIQGMPGDRGDSGSQGFRGVIGEPGKDGVPGLPGLPGLPGDGGQGFPGEKGLPGLPGEKGHPGPPGLPGNGLPGLPGPRGLPGDKGKDGLPGQQGLPGSKGITLPCIIPGSYGPSGFPGTPGFPGPKGSRGLPGTPGQPGSSGSKGEPGSPGLVHLPELPGFPGPRGEKGLPGFPGLPGKDGLPGMIGSPGLPGSKGATGDIFGAENGAPGEQGLQGLTGHKGFLGDSGLPGLKGVHGKPGLLGPKGERGSPGTPGQVGQPGTPGSSGPYGIKGKSGLPGAPGFPGISGHPGKKGTRGKKGPPGSIVKKGLPGLKGLPGNPGLVGLKGSPGSPGVAGLPALSGPKGEKGSVGFVGFPGIPGLPGIPGTRGLKGIPGSTGKMGPSGRAGTPGEKGDRGNPGPVGIPSPRRPMSNLWLKGDKGSQGSAGSNGFPGPRGDKGEAGRPGPPGLPGAPGLPGIIKGVSGKPGPPGFMGIRGLPGLKGSSGITGFPGMPGESGSQGIRGSPGLPGASGLPGLKGDNGQTVEISGSPGPKGQPGESGFKGTKGRDGLIGNIGFPGNKGEDGKVGVSGDVGLPGAPGFPGVAGMRGEPGLPGSSGHQGAIGPLGSPGLIGPKGFPGFPGLHGLNGLPGTKGTHGTPGPSITGVPGPAGLPGPKGEKGYPGIGIGAPGKPGLRGQKGDRGFPGLQGPAGLPGAPGISLPSLIAGQPGDPGRPGLDGERGRPGPAGPPGPPGPSSNQGDTGDPGFPGIPGPKGPKGDQGIPGFSGLPGELGLKGMRGEPGFMGTPGKVGPPGDPGFPGMKGKAGPRGSSGLQGDPGQTPTAEAVQVPPGPLGLPGIDGIPGLTGDPGAQGPVGLQGSKGLPGIPGKDGPSGLPGPPGALGDPGLPGLQGPPGFEGAPGQQGPFGMPGMPGQSMRVGYTLVKHSQSEQVPPCPIGMSQLWVGYSLLFVEGQEKAHNQDLGFAGSCLPRFSTMPFIYCNINEVCHYARRNDKSYWLSTTAPIPMMPVSQTQIPQYISRCSVCEAPSQAIAVHSQDITIPQCPLGWRSLWIGYSFLMHTAAGAEGGGQSLVSPGSCLEDFRATPFIECSGARGTCHYFANKYSFWLTTVEERQQFGELPVSETLKAGQLHTRVSRCQVCMKSL</sequence>
<proteinExistence type="evidence at protein level"/>
<reference key="1">
    <citation type="journal article" date="1994" name="J. Biol. Chem.">
        <title>Identification of a new collagen IV chain, alpha 6(IV), by cDNA isolation and assignment of the gene to chromosome Xq22, which is the same locus for COL4A5.</title>
        <authorList>
            <person name="Oohashi T."/>
            <person name="Sugimoto M."/>
            <person name="Mattei M.-G."/>
            <person name="Ninomiya Y."/>
        </authorList>
    </citation>
    <scope>NUCLEOTIDE SEQUENCE [MRNA] (ISOFORM B)</scope>
    <source>
        <tissue>Eye</tissue>
        <tissue>Kidney</tissue>
    </source>
</reference>
<reference key="2">
    <citation type="journal article" date="1994" name="J. Biol. Chem.">
        <title>Complete primary structure of the sixth chain of human basement membrane collagen, alpha 6(IV). Isolation of the cDNAs for alpha 6(IV) and comparison with five other type IV collagen chains.</title>
        <authorList>
            <person name="Zhou J."/>
            <person name="Ding M."/>
            <person name="Zhao Z."/>
            <person name="Reeders S.T."/>
        </authorList>
    </citation>
    <scope>NUCLEOTIDE SEQUENCE [MRNA] (ISOFORM A)</scope>
</reference>
<reference key="3">
    <citation type="journal article" date="1996" name="Genomics">
        <title>Structure of the human type IV collagen COL4A6 gene, which is mutated in Alport syndrome-associated leiomyomatosis.</title>
        <authorList>
            <person name="Zhang X."/>
            <person name="Zhou J."/>
            <person name="Reeders S.T."/>
            <person name="Tryggvason K."/>
        </authorList>
    </citation>
    <scope>NUCLEOTIDE SEQUENCE [GENOMIC DNA] (ISOFORMS A AND B)</scope>
    <scope>VARIANTS ALA-455 AND LYS-1110</scope>
</reference>
<reference key="4">
    <citation type="journal article" date="2005" name="Nature">
        <title>The DNA sequence of the human X chromosome.</title>
        <authorList>
            <person name="Ross M.T."/>
            <person name="Grafham D.V."/>
            <person name="Coffey A.J."/>
            <person name="Scherer S."/>
            <person name="McLay K."/>
            <person name="Muzny D."/>
            <person name="Platzer M."/>
            <person name="Howell G.R."/>
            <person name="Burrows C."/>
            <person name="Bird C.P."/>
            <person name="Frankish A."/>
            <person name="Lovell F.L."/>
            <person name="Howe K.L."/>
            <person name="Ashurst J.L."/>
            <person name="Fulton R.S."/>
            <person name="Sudbrak R."/>
            <person name="Wen G."/>
            <person name="Jones M.C."/>
            <person name="Hurles M.E."/>
            <person name="Andrews T.D."/>
            <person name="Scott C.E."/>
            <person name="Searle S."/>
            <person name="Ramser J."/>
            <person name="Whittaker A."/>
            <person name="Deadman R."/>
            <person name="Carter N.P."/>
            <person name="Hunt S.E."/>
            <person name="Chen R."/>
            <person name="Cree A."/>
            <person name="Gunaratne P."/>
            <person name="Havlak P."/>
            <person name="Hodgson A."/>
            <person name="Metzker M.L."/>
            <person name="Richards S."/>
            <person name="Scott G."/>
            <person name="Steffen D."/>
            <person name="Sodergren E."/>
            <person name="Wheeler D.A."/>
            <person name="Worley K.C."/>
            <person name="Ainscough R."/>
            <person name="Ambrose K.D."/>
            <person name="Ansari-Lari M.A."/>
            <person name="Aradhya S."/>
            <person name="Ashwell R.I."/>
            <person name="Babbage A.K."/>
            <person name="Bagguley C.L."/>
            <person name="Ballabio A."/>
            <person name="Banerjee R."/>
            <person name="Barker G.E."/>
            <person name="Barlow K.F."/>
            <person name="Barrett I.P."/>
            <person name="Bates K.N."/>
            <person name="Beare D.M."/>
            <person name="Beasley H."/>
            <person name="Beasley O."/>
            <person name="Beck A."/>
            <person name="Bethel G."/>
            <person name="Blechschmidt K."/>
            <person name="Brady N."/>
            <person name="Bray-Allen S."/>
            <person name="Bridgeman A.M."/>
            <person name="Brown A.J."/>
            <person name="Brown M.J."/>
            <person name="Bonnin D."/>
            <person name="Bruford E.A."/>
            <person name="Buhay C."/>
            <person name="Burch P."/>
            <person name="Burford D."/>
            <person name="Burgess J."/>
            <person name="Burrill W."/>
            <person name="Burton J."/>
            <person name="Bye J.M."/>
            <person name="Carder C."/>
            <person name="Carrel L."/>
            <person name="Chako J."/>
            <person name="Chapman J.C."/>
            <person name="Chavez D."/>
            <person name="Chen E."/>
            <person name="Chen G."/>
            <person name="Chen Y."/>
            <person name="Chen Z."/>
            <person name="Chinault C."/>
            <person name="Ciccodicola A."/>
            <person name="Clark S.Y."/>
            <person name="Clarke G."/>
            <person name="Clee C.M."/>
            <person name="Clegg S."/>
            <person name="Clerc-Blankenburg K."/>
            <person name="Clifford K."/>
            <person name="Cobley V."/>
            <person name="Cole C.G."/>
            <person name="Conquer J.S."/>
            <person name="Corby N."/>
            <person name="Connor R.E."/>
            <person name="David R."/>
            <person name="Davies J."/>
            <person name="Davis C."/>
            <person name="Davis J."/>
            <person name="Delgado O."/>
            <person name="Deshazo D."/>
            <person name="Dhami P."/>
            <person name="Ding Y."/>
            <person name="Dinh H."/>
            <person name="Dodsworth S."/>
            <person name="Draper H."/>
            <person name="Dugan-Rocha S."/>
            <person name="Dunham A."/>
            <person name="Dunn M."/>
            <person name="Durbin K.J."/>
            <person name="Dutta I."/>
            <person name="Eades T."/>
            <person name="Ellwood M."/>
            <person name="Emery-Cohen A."/>
            <person name="Errington H."/>
            <person name="Evans K.L."/>
            <person name="Faulkner L."/>
            <person name="Francis F."/>
            <person name="Frankland J."/>
            <person name="Fraser A.E."/>
            <person name="Galgoczy P."/>
            <person name="Gilbert J."/>
            <person name="Gill R."/>
            <person name="Gloeckner G."/>
            <person name="Gregory S.G."/>
            <person name="Gribble S."/>
            <person name="Griffiths C."/>
            <person name="Grocock R."/>
            <person name="Gu Y."/>
            <person name="Gwilliam R."/>
            <person name="Hamilton C."/>
            <person name="Hart E.A."/>
            <person name="Hawes A."/>
            <person name="Heath P.D."/>
            <person name="Heitmann K."/>
            <person name="Hennig S."/>
            <person name="Hernandez J."/>
            <person name="Hinzmann B."/>
            <person name="Ho S."/>
            <person name="Hoffs M."/>
            <person name="Howden P.J."/>
            <person name="Huckle E.J."/>
            <person name="Hume J."/>
            <person name="Hunt P.J."/>
            <person name="Hunt A.R."/>
            <person name="Isherwood J."/>
            <person name="Jacob L."/>
            <person name="Johnson D."/>
            <person name="Jones S."/>
            <person name="de Jong P.J."/>
            <person name="Joseph S.S."/>
            <person name="Keenan S."/>
            <person name="Kelly S."/>
            <person name="Kershaw J.K."/>
            <person name="Khan Z."/>
            <person name="Kioschis P."/>
            <person name="Klages S."/>
            <person name="Knights A.J."/>
            <person name="Kosiura A."/>
            <person name="Kovar-Smith C."/>
            <person name="Laird G.K."/>
            <person name="Langford C."/>
            <person name="Lawlor S."/>
            <person name="Leversha M."/>
            <person name="Lewis L."/>
            <person name="Liu W."/>
            <person name="Lloyd C."/>
            <person name="Lloyd D.M."/>
            <person name="Loulseged H."/>
            <person name="Loveland J.E."/>
            <person name="Lovell J.D."/>
            <person name="Lozado R."/>
            <person name="Lu J."/>
            <person name="Lyne R."/>
            <person name="Ma J."/>
            <person name="Maheshwari M."/>
            <person name="Matthews L.H."/>
            <person name="McDowall J."/>
            <person name="McLaren S."/>
            <person name="McMurray A."/>
            <person name="Meidl P."/>
            <person name="Meitinger T."/>
            <person name="Milne S."/>
            <person name="Miner G."/>
            <person name="Mistry S.L."/>
            <person name="Morgan M."/>
            <person name="Morris S."/>
            <person name="Mueller I."/>
            <person name="Mullikin J.C."/>
            <person name="Nguyen N."/>
            <person name="Nordsiek G."/>
            <person name="Nyakatura G."/>
            <person name="O'dell C.N."/>
            <person name="Okwuonu G."/>
            <person name="Palmer S."/>
            <person name="Pandian R."/>
            <person name="Parker D."/>
            <person name="Parrish J."/>
            <person name="Pasternak S."/>
            <person name="Patel D."/>
            <person name="Pearce A.V."/>
            <person name="Pearson D.M."/>
            <person name="Pelan S.E."/>
            <person name="Perez L."/>
            <person name="Porter K.M."/>
            <person name="Ramsey Y."/>
            <person name="Reichwald K."/>
            <person name="Rhodes S."/>
            <person name="Ridler K.A."/>
            <person name="Schlessinger D."/>
            <person name="Schueler M.G."/>
            <person name="Sehra H.K."/>
            <person name="Shaw-Smith C."/>
            <person name="Shen H."/>
            <person name="Sheridan E.M."/>
            <person name="Shownkeen R."/>
            <person name="Skuce C.D."/>
            <person name="Smith M.L."/>
            <person name="Sotheran E.C."/>
            <person name="Steingruber H.E."/>
            <person name="Steward C.A."/>
            <person name="Storey R."/>
            <person name="Swann R.M."/>
            <person name="Swarbreck D."/>
            <person name="Tabor P.E."/>
            <person name="Taudien S."/>
            <person name="Taylor T."/>
            <person name="Teague B."/>
            <person name="Thomas K."/>
            <person name="Thorpe A."/>
            <person name="Timms K."/>
            <person name="Tracey A."/>
            <person name="Trevanion S."/>
            <person name="Tromans A.C."/>
            <person name="d'Urso M."/>
            <person name="Verduzco D."/>
            <person name="Villasana D."/>
            <person name="Waldron L."/>
            <person name="Wall M."/>
            <person name="Wang Q."/>
            <person name="Warren J."/>
            <person name="Warry G.L."/>
            <person name="Wei X."/>
            <person name="West A."/>
            <person name="Whitehead S.L."/>
            <person name="Whiteley M.N."/>
            <person name="Wilkinson J.E."/>
            <person name="Willey D.L."/>
            <person name="Williams G."/>
            <person name="Williams L."/>
            <person name="Williamson A."/>
            <person name="Williamson H."/>
            <person name="Wilming L."/>
            <person name="Woodmansey R.L."/>
            <person name="Wray P.W."/>
            <person name="Yen J."/>
            <person name="Zhang J."/>
            <person name="Zhou J."/>
            <person name="Zoghbi H."/>
            <person name="Zorilla S."/>
            <person name="Buck D."/>
            <person name="Reinhardt R."/>
            <person name="Poustka A."/>
            <person name="Rosenthal A."/>
            <person name="Lehrach H."/>
            <person name="Meindl A."/>
            <person name="Minx P.J."/>
            <person name="Hillier L.W."/>
            <person name="Willard H.F."/>
            <person name="Wilson R.K."/>
            <person name="Waterston R.H."/>
            <person name="Rice C.M."/>
            <person name="Vaudin M."/>
            <person name="Coulson A."/>
            <person name="Nelson D.L."/>
            <person name="Weinstock G."/>
            <person name="Sulston J.E."/>
            <person name="Durbin R.M."/>
            <person name="Hubbard T."/>
            <person name="Gibbs R.A."/>
            <person name="Beck S."/>
            <person name="Rogers J."/>
            <person name="Bentley D.R."/>
        </authorList>
    </citation>
    <scope>NUCLEOTIDE SEQUENCE [LARGE SCALE GENOMIC DNA]</scope>
</reference>
<reference key="5">
    <citation type="submission" date="2005-09" db="EMBL/GenBank/DDBJ databases">
        <authorList>
            <person name="Mural R.J."/>
            <person name="Istrail S."/>
            <person name="Sutton G.G."/>
            <person name="Florea L."/>
            <person name="Halpern A.L."/>
            <person name="Mobarry C.M."/>
            <person name="Lippert R."/>
            <person name="Walenz B."/>
            <person name="Shatkay H."/>
            <person name="Dew I."/>
            <person name="Miller J.R."/>
            <person name="Flanigan M.J."/>
            <person name="Edwards N.J."/>
            <person name="Bolanos R."/>
            <person name="Fasulo D."/>
            <person name="Halldorsson B.V."/>
            <person name="Hannenhalli S."/>
            <person name="Turner R."/>
            <person name="Yooseph S."/>
            <person name="Lu F."/>
            <person name="Nusskern D.R."/>
            <person name="Shue B.C."/>
            <person name="Zheng X.H."/>
            <person name="Zhong F."/>
            <person name="Delcher A.L."/>
            <person name="Huson D.H."/>
            <person name="Kravitz S.A."/>
            <person name="Mouchard L."/>
            <person name="Reinert K."/>
            <person name="Remington K.A."/>
            <person name="Clark A.G."/>
            <person name="Waterman M.S."/>
            <person name="Eichler E.E."/>
            <person name="Adams M.D."/>
            <person name="Hunkapiller M.W."/>
            <person name="Myers E.W."/>
            <person name="Venter J.C."/>
        </authorList>
    </citation>
    <scope>NUCLEOTIDE SEQUENCE [LARGE SCALE GENOMIC DNA]</scope>
</reference>
<reference key="6">
    <citation type="journal article" date="1993" name="Science">
        <title>Deletion of the paired alpha 5(IV) and alpha 6(IV) collagen genes in inherited smooth muscle tumors.</title>
        <authorList>
            <person name="Zhou J."/>
            <person name="Mochizuki T."/>
            <person name="Smeets H."/>
            <person name="Antignac C."/>
            <person name="Laurila P."/>
            <person name="de Paepe A."/>
            <person name="Tryggvason K."/>
            <person name="Reeders S.T."/>
        </authorList>
    </citation>
    <scope>NUCLEOTIDE SEQUENCE [MRNA] OF 1-542 (ISOFORM A)</scope>
    <scope>INVOLVEMENT IN DL-ATS</scope>
</reference>
<reference key="7">
    <citation type="journal article" date="2003" name="Am. J. Med. Genet. A">
        <title>Alport syndrome with diffuse leiomyomatosis.</title>
        <authorList>
            <person name="Anker M.C."/>
            <person name="Arnemann J."/>
            <person name="Neumann K."/>
            <person name="Ahrens P."/>
            <person name="Schmidt H."/>
            <person name="Koenig R."/>
        </authorList>
    </citation>
    <scope>INVOLVEMENT IN DL-ATS</scope>
</reference>
<reference key="8">
    <citation type="journal article" date="2006" name="Science">
        <title>The consensus coding sequences of human breast and colorectal cancers.</title>
        <authorList>
            <person name="Sjoeblom T."/>
            <person name="Jones S."/>
            <person name="Wood L.D."/>
            <person name="Parsons D.W."/>
            <person name="Lin J."/>
            <person name="Barber T.D."/>
            <person name="Mandelker D."/>
            <person name="Leary R.J."/>
            <person name="Ptak J."/>
            <person name="Silliman N."/>
            <person name="Szabo S."/>
            <person name="Buckhaults P."/>
            <person name="Farrell C."/>
            <person name="Meeh P."/>
            <person name="Markowitz S.D."/>
            <person name="Willis J."/>
            <person name="Dawson D."/>
            <person name="Willson J.K.V."/>
            <person name="Gazdar A.F."/>
            <person name="Hartigan J."/>
            <person name="Wu L."/>
            <person name="Liu C."/>
            <person name="Parmigiani G."/>
            <person name="Park B.H."/>
            <person name="Bachman K.E."/>
            <person name="Papadopoulos N."/>
            <person name="Vogelstein B."/>
            <person name="Kinzler K.W."/>
            <person name="Velculescu V.E."/>
        </authorList>
    </citation>
    <scope>VARIANT [LARGE SCALE ANALYSIS] GLU-1130</scope>
</reference>
<reference key="9">
    <citation type="journal article" date="2014" name="Eur. J. Hum. Genet.">
        <title>Novel form of X-linked nonsyndromic hearing loss with cochlear malformation caused by a mutation in the type IV collagen gene COL4A6.</title>
        <authorList>
            <person name="Rost S."/>
            <person name="Bach E."/>
            <person name="Neuner C."/>
            <person name="Nanda I."/>
            <person name="Dysek S."/>
            <person name="Bittner R.E."/>
            <person name="Keller A."/>
            <person name="Bartsch O."/>
            <person name="Mlynski R."/>
            <person name="Haaf T."/>
            <person name="Mueller C.R."/>
            <person name="Kunstmann E."/>
        </authorList>
    </citation>
    <scope>VARIANT DFNX6 SER-591</scope>
</reference>
<evidence type="ECO:0000250" key="1"/>
<evidence type="ECO:0000255" key="2"/>
<evidence type="ECO:0000255" key="3">
    <source>
        <dbReference type="PROSITE-ProRule" id="PRU00736"/>
    </source>
</evidence>
<evidence type="ECO:0000256" key="4">
    <source>
        <dbReference type="SAM" id="MobiDB-lite"/>
    </source>
</evidence>
<evidence type="ECO:0000269" key="5">
    <source>
    </source>
</evidence>
<evidence type="ECO:0000269" key="6">
    <source>
    </source>
</evidence>
<evidence type="ECO:0000269" key="7">
    <source>
    </source>
</evidence>
<evidence type="ECO:0000303" key="8">
    <source>
    </source>
</evidence>
<evidence type="ECO:0000305" key="9"/>
<comment type="function">
    <text>Type IV collagen is the major structural component of glomerular basement membranes (GBM), forming a 'chicken-wire' meshwork together with laminins, proteoglycans and entactin/nidogen.</text>
</comment>
<comment type="subunit">
    <text>There are six type IV collagen isoforms, alpha 1(IV)-alpha 6(IV), each of which can form a triple helix structure with 2 other chains to generate type IV collagen network.</text>
</comment>
<comment type="interaction">
    <interactant intactId="EBI-2432407">
        <id>Q14031</id>
    </interactant>
    <interactant intactId="EBI-77613">
        <id>P05067</id>
        <label>APP</label>
    </interactant>
    <organismsDiffer>false</organismsDiffer>
    <experiments>3</experiments>
</comment>
<comment type="subcellular location">
    <subcellularLocation>
        <location>Secreted</location>
        <location>Extracellular space</location>
        <location>Extracellular matrix</location>
        <location>Basement membrane</location>
    </subcellularLocation>
</comment>
<comment type="alternative products">
    <event type="alternative splicing"/>
    <isoform>
        <id>Q14031-1</id>
        <name>A</name>
        <sequence type="displayed"/>
    </isoform>
    <isoform>
        <id>Q14031-2</id>
        <name>B</name>
        <sequence type="described" ref="VSP_001174"/>
    </isoform>
</comment>
<comment type="domain">
    <text>Alpha chains of type IV collagen have a non-collagenous domain (NC1) at their C-terminus, frequent interruptions of the G-X-Y repeats in the long central triple-helical domain (which may cause flexibility in the triple helix), and a short N-terminal triple-helical 7S domain.</text>
</comment>
<comment type="PTM">
    <text>Prolines at the third position of the tripeptide repeating unit (G-X-Y) are hydroxylated in some or all of the chains.</text>
</comment>
<comment type="PTM">
    <text>Type IV collagens contain numerous cysteine residues which are involved in inter- and intramolecular disulfide bonding. 12 of these, located in the NC1 domain, are conserved in all known type IV collagens.</text>
</comment>
<comment type="PTM">
    <text evidence="1">The trimeric structure of the NC1 domains is stabilized by covalent bonds between Lys and Met residues.</text>
</comment>
<comment type="disease">
    <text>Deletions covering the N-terminal regions of COL4A5 and COL4A6, which are localized in a head-to-head manner, are found in the chromosome Xq22.3 centromeric deletion syndrome. This results in a phenotype with features of diffuse leiomyomatosis and Alport syndrome (DL-ATS).</text>
</comment>
<comment type="disease" evidence="6">
    <disease id="DI-04012">
        <name>Deafness, X-linked, 6</name>
        <acronym>DFNX6</acronym>
        <description>A non-syndromic form of sensorineural hearing loss with prelingual onset. Sensorineural deafness results from damage to the neural receptors of the inner ear, the nerve pathways to the brain, or the area of the brain that receives sound information.</description>
        <dbReference type="MIM" id="300914"/>
    </disease>
    <text>The disease is caused by variants affecting the gene represented in this entry.</text>
</comment>
<comment type="similarity">
    <text evidence="3">Belongs to the type IV collagen family.</text>
</comment>